<keyword id="KW-0012">Acyltransferase</keyword>
<keyword id="KW-0963">Cytoplasm</keyword>
<keyword id="KW-0276">Fatty acid metabolism</keyword>
<keyword id="KW-0442">Lipid degradation</keyword>
<keyword id="KW-0443">Lipid metabolism</keyword>
<keyword id="KW-0808">Transferase</keyword>
<accession>B7LTZ0</accession>
<name>FADA_ESCF3</name>
<sequence>MEQVVIVDAIRTPMGRSKGGAFRNVRAEDLSAHLMRSLLARNPALEAAALDDIYWGCVQQTLEQGFNIARNAALLAEVPHSVPAVTVNRLCGSSMQALHDAARMIMTGDAQACLVGGVEHMGHVPMSHGVDFHPGLSRNVAKAAGMMGLTAEMLARMHGISREMQDAFAARSHARAWAATQSGAFKNEIIPTGGHDADGVLKQFNYDEVIRPETTMEALATLRPAFDPVSGTVTAGSSSALSDGAAAMLVMSESRARELGLKPRARVRSMAVVGCDPSIMGYGPVPASKLALKKAGLSASDIGVFEMNEAFAAQILPCIKDLGLMEQIDEKINLNGGAIALGHPLGCSGARISTTLLNLMERKDVQFGLATMCIGLGQGIATVFERV</sequence>
<comment type="function">
    <text evidence="1">Catalyzes the final step of fatty acid oxidation in which acetyl-CoA is released and the CoA ester of a fatty acid two carbons shorter is formed.</text>
</comment>
<comment type="catalytic activity">
    <reaction evidence="1">
        <text>an acyl-CoA + acetyl-CoA = a 3-oxoacyl-CoA + CoA</text>
        <dbReference type="Rhea" id="RHEA:21564"/>
        <dbReference type="ChEBI" id="CHEBI:57287"/>
        <dbReference type="ChEBI" id="CHEBI:57288"/>
        <dbReference type="ChEBI" id="CHEBI:58342"/>
        <dbReference type="ChEBI" id="CHEBI:90726"/>
        <dbReference type="EC" id="2.3.1.16"/>
    </reaction>
</comment>
<comment type="pathway">
    <text evidence="1">Lipid metabolism; fatty acid beta-oxidation.</text>
</comment>
<comment type="subunit">
    <text evidence="1">Heterotetramer of two alpha chains (FadB) and two beta chains (FadA).</text>
</comment>
<comment type="subcellular location">
    <subcellularLocation>
        <location evidence="1">Cytoplasm</location>
    </subcellularLocation>
</comment>
<comment type="similarity">
    <text evidence="1">Belongs to the thiolase-like superfamily. Thiolase family.</text>
</comment>
<evidence type="ECO:0000255" key="1">
    <source>
        <dbReference type="HAMAP-Rule" id="MF_01620"/>
    </source>
</evidence>
<organism>
    <name type="scientific">Escherichia fergusonii (strain ATCC 35469 / DSM 13698 / CCUG 18766 / IAM 14443 / JCM 21226 / LMG 7866 / NBRC 102419 / NCTC 12128 / CDC 0568-73)</name>
    <dbReference type="NCBI Taxonomy" id="585054"/>
    <lineage>
        <taxon>Bacteria</taxon>
        <taxon>Pseudomonadati</taxon>
        <taxon>Pseudomonadota</taxon>
        <taxon>Gammaproteobacteria</taxon>
        <taxon>Enterobacterales</taxon>
        <taxon>Enterobacteriaceae</taxon>
        <taxon>Escherichia</taxon>
    </lineage>
</organism>
<dbReference type="EC" id="2.3.1.16" evidence="1"/>
<dbReference type="EMBL" id="CU928158">
    <property type="protein sequence ID" value="CAQ91098.1"/>
    <property type="molecule type" value="Genomic_DNA"/>
</dbReference>
<dbReference type="RefSeq" id="WP_000438734.1">
    <property type="nucleotide sequence ID" value="NC_011740.1"/>
</dbReference>
<dbReference type="SMR" id="B7LTZ0"/>
<dbReference type="GeneID" id="75059763"/>
<dbReference type="KEGG" id="efe:EFER_3636"/>
<dbReference type="HOGENOM" id="CLU_031026_2_3_6"/>
<dbReference type="OrthoDB" id="9764638at2"/>
<dbReference type="UniPathway" id="UPA00659"/>
<dbReference type="Proteomes" id="UP000000745">
    <property type="component" value="Chromosome"/>
</dbReference>
<dbReference type="GO" id="GO:0005737">
    <property type="term" value="C:cytoplasm"/>
    <property type="evidence" value="ECO:0007669"/>
    <property type="project" value="UniProtKB-SubCell"/>
</dbReference>
<dbReference type="GO" id="GO:0003988">
    <property type="term" value="F:acetyl-CoA C-acyltransferase activity"/>
    <property type="evidence" value="ECO:0007669"/>
    <property type="project" value="UniProtKB-UniRule"/>
</dbReference>
<dbReference type="GO" id="GO:0006635">
    <property type="term" value="P:fatty acid beta-oxidation"/>
    <property type="evidence" value="ECO:0007669"/>
    <property type="project" value="UniProtKB-UniRule"/>
</dbReference>
<dbReference type="GO" id="GO:0010124">
    <property type="term" value="P:phenylacetate catabolic process"/>
    <property type="evidence" value="ECO:0007669"/>
    <property type="project" value="TreeGrafter"/>
</dbReference>
<dbReference type="CDD" id="cd00751">
    <property type="entry name" value="thiolase"/>
    <property type="match status" value="1"/>
</dbReference>
<dbReference type="FunFam" id="3.40.47.10:FF:000010">
    <property type="entry name" value="Acetyl-CoA acetyltransferase (Thiolase)"/>
    <property type="match status" value="1"/>
</dbReference>
<dbReference type="Gene3D" id="3.40.47.10">
    <property type="match status" value="2"/>
</dbReference>
<dbReference type="HAMAP" id="MF_01620">
    <property type="entry name" value="FadA"/>
    <property type="match status" value="1"/>
</dbReference>
<dbReference type="InterPro" id="IPR012805">
    <property type="entry name" value="FadA"/>
</dbReference>
<dbReference type="InterPro" id="IPR002155">
    <property type="entry name" value="Thiolase"/>
</dbReference>
<dbReference type="InterPro" id="IPR016039">
    <property type="entry name" value="Thiolase-like"/>
</dbReference>
<dbReference type="InterPro" id="IPR050215">
    <property type="entry name" value="Thiolase-like_sf_Thiolase"/>
</dbReference>
<dbReference type="InterPro" id="IPR020615">
    <property type="entry name" value="Thiolase_acyl_enz_int_AS"/>
</dbReference>
<dbReference type="InterPro" id="IPR020610">
    <property type="entry name" value="Thiolase_AS"/>
</dbReference>
<dbReference type="InterPro" id="IPR020617">
    <property type="entry name" value="Thiolase_C"/>
</dbReference>
<dbReference type="InterPro" id="IPR020613">
    <property type="entry name" value="Thiolase_CS"/>
</dbReference>
<dbReference type="InterPro" id="IPR020616">
    <property type="entry name" value="Thiolase_N"/>
</dbReference>
<dbReference type="NCBIfam" id="TIGR01930">
    <property type="entry name" value="AcCoA-C-Actrans"/>
    <property type="match status" value="1"/>
</dbReference>
<dbReference type="NCBIfam" id="TIGR02445">
    <property type="entry name" value="fadA"/>
    <property type="match status" value="1"/>
</dbReference>
<dbReference type="NCBIfam" id="NF006510">
    <property type="entry name" value="PRK08947.1"/>
    <property type="match status" value="1"/>
</dbReference>
<dbReference type="PANTHER" id="PTHR43853:SF11">
    <property type="entry name" value="3-KETOACYL-COA THIOLASE FADA"/>
    <property type="match status" value="1"/>
</dbReference>
<dbReference type="PANTHER" id="PTHR43853">
    <property type="entry name" value="3-KETOACYL-COA THIOLASE, PEROXISOMAL"/>
    <property type="match status" value="1"/>
</dbReference>
<dbReference type="Pfam" id="PF02803">
    <property type="entry name" value="Thiolase_C"/>
    <property type="match status" value="1"/>
</dbReference>
<dbReference type="Pfam" id="PF00108">
    <property type="entry name" value="Thiolase_N"/>
    <property type="match status" value="1"/>
</dbReference>
<dbReference type="PIRSF" id="PIRSF000429">
    <property type="entry name" value="Ac-CoA_Ac_transf"/>
    <property type="match status" value="1"/>
</dbReference>
<dbReference type="SUPFAM" id="SSF53901">
    <property type="entry name" value="Thiolase-like"/>
    <property type="match status" value="2"/>
</dbReference>
<dbReference type="PROSITE" id="PS00098">
    <property type="entry name" value="THIOLASE_1"/>
    <property type="match status" value="1"/>
</dbReference>
<dbReference type="PROSITE" id="PS00737">
    <property type="entry name" value="THIOLASE_2"/>
    <property type="match status" value="1"/>
</dbReference>
<dbReference type="PROSITE" id="PS00099">
    <property type="entry name" value="THIOLASE_3"/>
    <property type="match status" value="1"/>
</dbReference>
<reference key="1">
    <citation type="journal article" date="2009" name="PLoS Genet.">
        <title>Organised genome dynamics in the Escherichia coli species results in highly diverse adaptive paths.</title>
        <authorList>
            <person name="Touchon M."/>
            <person name="Hoede C."/>
            <person name="Tenaillon O."/>
            <person name="Barbe V."/>
            <person name="Baeriswyl S."/>
            <person name="Bidet P."/>
            <person name="Bingen E."/>
            <person name="Bonacorsi S."/>
            <person name="Bouchier C."/>
            <person name="Bouvet O."/>
            <person name="Calteau A."/>
            <person name="Chiapello H."/>
            <person name="Clermont O."/>
            <person name="Cruveiller S."/>
            <person name="Danchin A."/>
            <person name="Diard M."/>
            <person name="Dossat C."/>
            <person name="Karoui M.E."/>
            <person name="Frapy E."/>
            <person name="Garry L."/>
            <person name="Ghigo J.M."/>
            <person name="Gilles A.M."/>
            <person name="Johnson J."/>
            <person name="Le Bouguenec C."/>
            <person name="Lescat M."/>
            <person name="Mangenot S."/>
            <person name="Martinez-Jehanne V."/>
            <person name="Matic I."/>
            <person name="Nassif X."/>
            <person name="Oztas S."/>
            <person name="Petit M.A."/>
            <person name="Pichon C."/>
            <person name="Rouy Z."/>
            <person name="Ruf C.S."/>
            <person name="Schneider D."/>
            <person name="Tourret J."/>
            <person name="Vacherie B."/>
            <person name="Vallenet D."/>
            <person name="Medigue C."/>
            <person name="Rocha E.P.C."/>
            <person name="Denamur E."/>
        </authorList>
    </citation>
    <scope>NUCLEOTIDE SEQUENCE [LARGE SCALE GENOMIC DNA]</scope>
    <source>
        <strain>ATCC 35469 / DSM 13698 / BCRC 15582 / CCUG 18766 / IAM 14443 / JCM 21226 / LMG 7866 / NBRC 102419 / NCTC 12128 / CDC 0568-73</strain>
    </source>
</reference>
<proteinExistence type="inferred from homology"/>
<feature type="chain" id="PRO_1000186024" description="3-ketoacyl-CoA thiolase">
    <location>
        <begin position="1"/>
        <end position="387"/>
    </location>
</feature>
<feature type="active site" description="Acyl-thioester intermediate" evidence="1">
    <location>
        <position position="91"/>
    </location>
</feature>
<feature type="active site" description="Proton acceptor" evidence="1">
    <location>
        <position position="343"/>
    </location>
</feature>
<feature type="active site" description="Proton acceptor" evidence="1">
    <location>
        <position position="373"/>
    </location>
</feature>
<protein>
    <recommendedName>
        <fullName evidence="1">3-ketoacyl-CoA thiolase</fullName>
        <ecNumber evidence="1">2.3.1.16</ecNumber>
    </recommendedName>
    <alternativeName>
        <fullName evidence="1">Acetyl-CoA acyltransferase</fullName>
    </alternativeName>
    <alternativeName>
        <fullName evidence="1">Beta-ketothiolase</fullName>
    </alternativeName>
    <alternativeName>
        <fullName evidence="1">Fatty acid oxidation complex subunit beta</fullName>
    </alternativeName>
</protein>
<gene>
    <name evidence="1" type="primary">fadA</name>
    <name type="ordered locus">EFER_3636</name>
</gene>